<protein>
    <recommendedName>
        <fullName evidence="1">UDP-N-acetyl-D-mannosaminuronic acid transferase</fullName>
        <shortName evidence="1">UDP-ManNAcA transferase</shortName>
        <ecNumber evidence="1">2.4.1.180</ecNumber>
    </recommendedName>
</protein>
<comment type="function">
    <text evidence="1">Catalyzes the synthesis of Und-PP-GlcNAc-ManNAcA (Lipid II), the second lipid-linked intermediate involved in enterobacterial common antigen (ECA) synthesis.</text>
</comment>
<comment type="catalytic activity">
    <reaction evidence="1">
        <text>UDP-N-acetyl-alpha-D-mannosaminouronate + N-acetyl-alpha-D-glucosaminyl-di-trans,octa-cis-undecaprenyl diphosphate = beta-D-ManNAcA-(1-&gt;4)-alpha-D-GlcNAc-di-trans,octa-cis-undecaprenyl diphosphate + UDP + H(+)</text>
        <dbReference type="Rhea" id="RHEA:28366"/>
        <dbReference type="ChEBI" id="CHEBI:15378"/>
        <dbReference type="ChEBI" id="CHEBI:58223"/>
        <dbReference type="ChEBI" id="CHEBI:61495"/>
        <dbReference type="ChEBI" id="CHEBI:62959"/>
        <dbReference type="ChEBI" id="CHEBI:70731"/>
        <dbReference type="EC" id="2.4.1.180"/>
    </reaction>
</comment>
<comment type="pathway">
    <text evidence="1">Bacterial outer membrane biogenesis; enterobacterial common antigen biosynthesis.</text>
</comment>
<comment type="similarity">
    <text evidence="1">Belongs to the glycosyltransferase 26 family.</text>
</comment>
<evidence type="ECO:0000255" key="1">
    <source>
        <dbReference type="HAMAP-Rule" id="MF_01001"/>
    </source>
</evidence>
<accession>B7L953</accession>
<feature type="chain" id="PRO_1000148780" description="UDP-N-acetyl-D-mannosaminuronic acid transferase">
    <location>
        <begin position="1"/>
        <end position="246"/>
    </location>
</feature>
<proteinExistence type="inferred from homology"/>
<gene>
    <name evidence="1" type="primary">wecG</name>
    <name evidence="1" type="synonym">rffM</name>
    <name type="ordered locus">EC55989_4267</name>
</gene>
<name>WECG_ECO55</name>
<reference key="1">
    <citation type="journal article" date="2009" name="PLoS Genet.">
        <title>Organised genome dynamics in the Escherichia coli species results in highly diverse adaptive paths.</title>
        <authorList>
            <person name="Touchon M."/>
            <person name="Hoede C."/>
            <person name="Tenaillon O."/>
            <person name="Barbe V."/>
            <person name="Baeriswyl S."/>
            <person name="Bidet P."/>
            <person name="Bingen E."/>
            <person name="Bonacorsi S."/>
            <person name="Bouchier C."/>
            <person name="Bouvet O."/>
            <person name="Calteau A."/>
            <person name="Chiapello H."/>
            <person name="Clermont O."/>
            <person name="Cruveiller S."/>
            <person name="Danchin A."/>
            <person name="Diard M."/>
            <person name="Dossat C."/>
            <person name="Karoui M.E."/>
            <person name="Frapy E."/>
            <person name="Garry L."/>
            <person name="Ghigo J.M."/>
            <person name="Gilles A.M."/>
            <person name="Johnson J."/>
            <person name="Le Bouguenec C."/>
            <person name="Lescat M."/>
            <person name="Mangenot S."/>
            <person name="Martinez-Jehanne V."/>
            <person name="Matic I."/>
            <person name="Nassif X."/>
            <person name="Oztas S."/>
            <person name="Petit M.A."/>
            <person name="Pichon C."/>
            <person name="Rouy Z."/>
            <person name="Ruf C.S."/>
            <person name="Schneider D."/>
            <person name="Tourret J."/>
            <person name="Vacherie B."/>
            <person name="Vallenet D."/>
            <person name="Medigue C."/>
            <person name="Rocha E.P.C."/>
            <person name="Denamur E."/>
        </authorList>
    </citation>
    <scope>NUCLEOTIDE SEQUENCE [LARGE SCALE GENOMIC DNA]</scope>
    <source>
        <strain>55989 / EAEC</strain>
    </source>
</reference>
<dbReference type="EC" id="2.4.1.180" evidence="1"/>
<dbReference type="EMBL" id="CU928145">
    <property type="protein sequence ID" value="CAV00911.1"/>
    <property type="molecule type" value="Genomic_DNA"/>
</dbReference>
<dbReference type="RefSeq" id="WP_001064010.1">
    <property type="nucleotide sequence ID" value="NC_011748.1"/>
</dbReference>
<dbReference type="SMR" id="B7L953"/>
<dbReference type="CAZy" id="GT26">
    <property type="family name" value="Glycosyltransferase Family 26"/>
</dbReference>
<dbReference type="GeneID" id="75204785"/>
<dbReference type="KEGG" id="eck:EC55989_4267"/>
<dbReference type="HOGENOM" id="CLU_063203_3_2_6"/>
<dbReference type="UniPathway" id="UPA00566"/>
<dbReference type="Proteomes" id="UP000000746">
    <property type="component" value="Chromosome"/>
</dbReference>
<dbReference type="GO" id="GO:0047241">
    <property type="term" value="F:lipopolysaccharide N-acetylmannosaminouronosyltransferase activity"/>
    <property type="evidence" value="ECO:0007669"/>
    <property type="project" value="UniProtKB-UniRule"/>
</dbReference>
<dbReference type="GO" id="GO:0009246">
    <property type="term" value="P:enterobacterial common antigen biosynthetic process"/>
    <property type="evidence" value="ECO:0007669"/>
    <property type="project" value="UniProtKB-UniRule"/>
</dbReference>
<dbReference type="CDD" id="cd06533">
    <property type="entry name" value="Glyco_transf_WecG_TagA"/>
    <property type="match status" value="1"/>
</dbReference>
<dbReference type="HAMAP" id="MF_01001">
    <property type="entry name" value="WecG_RffM"/>
    <property type="match status" value="1"/>
</dbReference>
<dbReference type="InterPro" id="IPR023085">
    <property type="entry name" value="UDP-ManNAcA_Trfase_WecG"/>
</dbReference>
<dbReference type="InterPro" id="IPR004629">
    <property type="entry name" value="WecG_TagA_CpsF"/>
</dbReference>
<dbReference type="NCBIfam" id="NF002980">
    <property type="entry name" value="PRK03692.1"/>
    <property type="match status" value="1"/>
</dbReference>
<dbReference type="NCBIfam" id="TIGR00696">
    <property type="entry name" value="wecG_tagA_cpsF"/>
    <property type="match status" value="1"/>
</dbReference>
<dbReference type="PANTHER" id="PTHR34136">
    <property type="match status" value="1"/>
</dbReference>
<dbReference type="PANTHER" id="PTHR34136:SF1">
    <property type="entry name" value="UDP-N-ACETYL-D-MANNOSAMINURONIC ACID TRANSFERASE"/>
    <property type="match status" value="1"/>
</dbReference>
<dbReference type="Pfam" id="PF03808">
    <property type="entry name" value="Glyco_tran_WecG"/>
    <property type="match status" value="1"/>
</dbReference>
<sequence length="246" mass="28001">MNNNTMAPTYTLRGLQLIGWRDMQHALDYLFADGHLKQGTLVAINAEKMLTIEDNAEVRELINAAEFKYADGISVVRSVRKKYPQAQVSRVAGADLWEELMARAGKEGTPVFLVGGKPEVLAQTEAKLRNQWNVNIVGSQDGYFKPEQRQALFERIHASGAQIVTVAMGSPKQEIFMRDCRLVHPDALYMGVGGTYDVFTGHVKRAPKIWQTLGLEWLYRLLSQPSRIKRQLRLLRYLRWHYTGNL</sequence>
<keyword id="KW-0328">Glycosyltransferase</keyword>
<keyword id="KW-1185">Reference proteome</keyword>
<keyword id="KW-0808">Transferase</keyword>
<organism>
    <name type="scientific">Escherichia coli (strain 55989 / EAEC)</name>
    <dbReference type="NCBI Taxonomy" id="585055"/>
    <lineage>
        <taxon>Bacteria</taxon>
        <taxon>Pseudomonadati</taxon>
        <taxon>Pseudomonadota</taxon>
        <taxon>Gammaproteobacteria</taxon>
        <taxon>Enterobacterales</taxon>
        <taxon>Enterobacteriaceae</taxon>
        <taxon>Escherichia</taxon>
    </lineage>
</organism>